<reference key="1">
    <citation type="journal article" date="1997" name="Nature">
        <title>The complete genome sequence of the hyperthermophilic, sulphate-reducing archaeon Archaeoglobus fulgidus.</title>
        <authorList>
            <person name="Klenk H.-P."/>
            <person name="Clayton R.A."/>
            <person name="Tomb J.-F."/>
            <person name="White O."/>
            <person name="Nelson K.E."/>
            <person name="Ketchum K.A."/>
            <person name="Dodson R.J."/>
            <person name="Gwinn M.L."/>
            <person name="Hickey E.K."/>
            <person name="Peterson J.D."/>
            <person name="Richardson D.L."/>
            <person name="Kerlavage A.R."/>
            <person name="Graham D.E."/>
            <person name="Kyrpides N.C."/>
            <person name="Fleischmann R.D."/>
            <person name="Quackenbush J."/>
            <person name="Lee N.H."/>
            <person name="Sutton G.G."/>
            <person name="Gill S.R."/>
            <person name="Kirkness E.F."/>
            <person name="Dougherty B.A."/>
            <person name="McKenney K."/>
            <person name="Adams M.D."/>
            <person name="Loftus B.J."/>
            <person name="Peterson S.N."/>
            <person name="Reich C.I."/>
            <person name="McNeil L.K."/>
            <person name="Badger J.H."/>
            <person name="Glodek A."/>
            <person name="Zhou L."/>
            <person name="Overbeek R."/>
            <person name="Gocayne J.D."/>
            <person name="Weidman J.F."/>
            <person name="McDonald L.A."/>
            <person name="Utterback T.R."/>
            <person name="Cotton M.D."/>
            <person name="Spriggs T."/>
            <person name="Artiach P."/>
            <person name="Kaine B.P."/>
            <person name="Sykes S.M."/>
            <person name="Sadow P.W."/>
            <person name="D'Andrea K.P."/>
            <person name="Bowman C."/>
            <person name="Fujii C."/>
            <person name="Garland S.A."/>
            <person name="Mason T.M."/>
            <person name="Olsen G.J."/>
            <person name="Fraser C.M."/>
            <person name="Smith H.O."/>
            <person name="Woese C.R."/>
            <person name="Venter J.C."/>
        </authorList>
    </citation>
    <scope>NUCLEOTIDE SEQUENCE [LARGE SCALE GENOMIC DNA]</scope>
    <source>
        <strain>ATCC 49558 / DSM 4304 / JCM 9628 / NBRC 100126 / VC-16</strain>
    </source>
</reference>
<name>SUCD1_ARCFU</name>
<accession>O28733</accession>
<comment type="function">
    <text evidence="1">Succinyl-CoA synthetase functions in the citric acid cycle (TCA), coupling the hydrolysis of succinyl-CoA to the synthesis of either ATP or GTP and thus represents the only step of substrate-level phosphorylation in the TCA. The alpha subunit of the enzyme binds the substrates coenzyme A and phosphate, while succinate binding and nucleotide specificity is provided by the beta subunit.</text>
</comment>
<comment type="catalytic activity">
    <reaction evidence="1">
        <text>succinate + ATP + CoA = succinyl-CoA + ADP + phosphate</text>
        <dbReference type="Rhea" id="RHEA:17661"/>
        <dbReference type="ChEBI" id="CHEBI:30031"/>
        <dbReference type="ChEBI" id="CHEBI:30616"/>
        <dbReference type="ChEBI" id="CHEBI:43474"/>
        <dbReference type="ChEBI" id="CHEBI:57287"/>
        <dbReference type="ChEBI" id="CHEBI:57292"/>
        <dbReference type="ChEBI" id="CHEBI:456216"/>
        <dbReference type="EC" id="6.2.1.5"/>
    </reaction>
    <physiologicalReaction direction="right-to-left" evidence="1">
        <dbReference type="Rhea" id="RHEA:17663"/>
    </physiologicalReaction>
</comment>
<comment type="catalytic activity">
    <reaction evidence="1">
        <text>GTP + succinate + CoA = succinyl-CoA + GDP + phosphate</text>
        <dbReference type="Rhea" id="RHEA:22120"/>
        <dbReference type="ChEBI" id="CHEBI:30031"/>
        <dbReference type="ChEBI" id="CHEBI:37565"/>
        <dbReference type="ChEBI" id="CHEBI:43474"/>
        <dbReference type="ChEBI" id="CHEBI:57287"/>
        <dbReference type="ChEBI" id="CHEBI:57292"/>
        <dbReference type="ChEBI" id="CHEBI:58189"/>
    </reaction>
    <physiologicalReaction direction="right-to-left" evidence="1">
        <dbReference type="Rhea" id="RHEA:22122"/>
    </physiologicalReaction>
</comment>
<comment type="pathway">
    <text evidence="1">Carbohydrate metabolism; tricarboxylic acid cycle; succinate from succinyl-CoA (ligase route): step 1/1.</text>
</comment>
<comment type="subunit">
    <text evidence="1">Heterotetramer of two alpha and two beta subunits.</text>
</comment>
<comment type="similarity">
    <text evidence="1">Belongs to the succinate/malate CoA ligase alpha subunit family.</text>
</comment>
<feature type="chain" id="PRO_0000102808" description="Succinate--CoA ligase [ADP-forming] subunit alpha 1">
    <location>
        <begin position="1"/>
        <end position="291"/>
    </location>
</feature>
<feature type="active site" description="Tele-phosphohistidine intermediate" evidence="1">
    <location>
        <position position="249"/>
    </location>
</feature>
<feature type="binding site" evidence="1">
    <location>
        <begin position="20"/>
        <end position="23"/>
    </location>
    <ligand>
        <name>CoA</name>
        <dbReference type="ChEBI" id="CHEBI:57287"/>
    </ligand>
</feature>
<feature type="binding site" evidence="1">
    <location>
        <position position="46"/>
    </location>
    <ligand>
        <name>CoA</name>
        <dbReference type="ChEBI" id="CHEBI:57287"/>
    </ligand>
</feature>
<feature type="binding site" evidence="1">
    <location>
        <begin position="99"/>
        <end position="101"/>
    </location>
    <ligand>
        <name>CoA</name>
        <dbReference type="ChEBI" id="CHEBI:57287"/>
    </ligand>
</feature>
<feature type="binding site" evidence="1">
    <location>
        <position position="162"/>
    </location>
    <ligand>
        <name>substrate</name>
        <note>ligand shared with subunit beta</note>
    </ligand>
</feature>
<gene>
    <name evidence="1" type="primary">sucD1</name>
    <name type="ordered locus">AF_1539</name>
</gene>
<proteinExistence type="inferred from homology"/>
<protein>
    <recommendedName>
        <fullName evidence="1">Succinate--CoA ligase [ADP-forming] subunit alpha 1</fullName>
        <ecNumber evidence="1">6.2.1.5</ecNumber>
    </recommendedName>
    <alternativeName>
        <fullName evidence="1">Succinyl-CoA synthetase subunit alpha 1</fullName>
        <shortName evidence="1">SCS-alpha 1</shortName>
    </alternativeName>
</protein>
<organism>
    <name type="scientific">Archaeoglobus fulgidus (strain ATCC 49558 / DSM 4304 / JCM 9628 / NBRC 100126 / VC-16)</name>
    <dbReference type="NCBI Taxonomy" id="224325"/>
    <lineage>
        <taxon>Archaea</taxon>
        <taxon>Methanobacteriati</taxon>
        <taxon>Methanobacteriota</taxon>
        <taxon>Archaeoglobi</taxon>
        <taxon>Archaeoglobales</taxon>
        <taxon>Archaeoglobaceae</taxon>
        <taxon>Archaeoglobus</taxon>
    </lineage>
</organism>
<keyword id="KW-0436">Ligase</keyword>
<keyword id="KW-0547">Nucleotide-binding</keyword>
<keyword id="KW-1185">Reference proteome</keyword>
<keyword id="KW-0816">Tricarboxylic acid cycle</keyword>
<dbReference type="EC" id="6.2.1.5" evidence="1"/>
<dbReference type="EMBL" id="AE000782">
    <property type="protein sequence ID" value="AAB89707.1"/>
    <property type="molecule type" value="Genomic_DNA"/>
</dbReference>
<dbReference type="PIR" id="B69442">
    <property type="entry name" value="B69442"/>
</dbReference>
<dbReference type="SMR" id="O28733"/>
<dbReference type="STRING" id="224325.AF_1539"/>
<dbReference type="PaxDb" id="224325-AF_1539"/>
<dbReference type="EnsemblBacteria" id="AAB89707">
    <property type="protein sequence ID" value="AAB89707"/>
    <property type="gene ID" value="AF_1539"/>
</dbReference>
<dbReference type="KEGG" id="afu:AF_1539"/>
<dbReference type="eggNOG" id="arCOG01339">
    <property type="taxonomic scope" value="Archaea"/>
</dbReference>
<dbReference type="HOGENOM" id="CLU_052104_0_0_2"/>
<dbReference type="OrthoDB" id="55711at2157"/>
<dbReference type="PhylomeDB" id="O28733"/>
<dbReference type="UniPathway" id="UPA00223">
    <property type="reaction ID" value="UER00999"/>
</dbReference>
<dbReference type="Proteomes" id="UP000002199">
    <property type="component" value="Chromosome"/>
</dbReference>
<dbReference type="GO" id="GO:0009361">
    <property type="term" value="C:succinate-CoA ligase complex (ADP-forming)"/>
    <property type="evidence" value="ECO:0007669"/>
    <property type="project" value="TreeGrafter"/>
</dbReference>
<dbReference type="GO" id="GO:0000166">
    <property type="term" value="F:nucleotide binding"/>
    <property type="evidence" value="ECO:0007669"/>
    <property type="project" value="UniProtKB-KW"/>
</dbReference>
<dbReference type="GO" id="GO:0004775">
    <property type="term" value="F:succinate-CoA ligase (ADP-forming) activity"/>
    <property type="evidence" value="ECO:0007669"/>
    <property type="project" value="UniProtKB-UniRule"/>
</dbReference>
<dbReference type="GO" id="GO:0004776">
    <property type="term" value="F:succinate-CoA ligase (GDP-forming) activity"/>
    <property type="evidence" value="ECO:0007669"/>
    <property type="project" value="TreeGrafter"/>
</dbReference>
<dbReference type="GO" id="GO:0006099">
    <property type="term" value="P:tricarboxylic acid cycle"/>
    <property type="evidence" value="ECO:0007669"/>
    <property type="project" value="UniProtKB-UniRule"/>
</dbReference>
<dbReference type="FunFam" id="3.40.50.261:FF:000006">
    <property type="entry name" value="Succinate--CoA ligase [ADP-forming] subunit alpha"/>
    <property type="match status" value="1"/>
</dbReference>
<dbReference type="FunFam" id="3.40.50.720:FF:000277">
    <property type="entry name" value="Succinate--CoA ligase [ADP-forming] subunit alpha"/>
    <property type="match status" value="1"/>
</dbReference>
<dbReference type="Gene3D" id="3.40.50.720">
    <property type="entry name" value="NAD(P)-binding Rossmann-like Domain"/>
    <property type="match status" value="1"/>
</dbReference>
<dbReference type="Gene3D" id="3.40.50.261">
    <property type="entry name" value="Succinyl-CoA synthetase domains"/>
    <property type="match status" value="1"/>
</dbReference>
<dbReference type="HAMAP" id="MF_01988">
    <property type="entry name" value="Succ_CoA_alpha"/>
    <property type="match status" value="1"/>
</dbReference>
<dbReference type="InterPro" id="IPR017440">
    <property type="entry name" value="Cit_synth/succinyl-CoA_lig_AS"/>
</dbReference>
<dbReference type="InterPro" id="IPR033847">
    <property type="entry name" value="Citrt_syn/SCS-alpha_CS"/>
</dbReference>
<dbReference type="InterPro" id="IPR003781">
    <property type="entry name" value="CoA-bd"/>
</dbReference>
<dbReference type="InterPro" id="IPR005810">
    <property type="entry name" value="CoA_lig_alpha"/>
</dbReference>
<dbReference type="InterPro" id="IPR036291">
    <property type="entry name" value="NAD(P)-bd_dom_sf"/>
</dbReference>
<dbReference type="InterPro" id="IPR005811">
    <property type="entry name" value="SUCC_ACL_C"/>
</dbReference>
<dbReference type="InterPro" id="IPR016102">
    <property type="entry name" value="Succinyl-CoA_synth-like"/>
</dbReference>
<dbReference type="NCBIfam" id="NF004230">
    <property type="entry name" value="PRK05678.1"/>
    <property type="match status" value="1"/>
</dbReference>
<dbReference type="NCBIfam" id="TIGR01019">
    <property type="entry name" value="sucCoAalpha"/>
    <property type="match status" value="1"/>
</dbReference>
<dbReference type="PANTHER" id="PTHR11117:SF2">
    <property type="entry name" value="SUCCINATE--COA LIGASE [ADP_GDP-FORMING] SUBUNIT ALPHA, MITOCHONDRIAL"/>
    <property type="match status" value="1"/>
</dbReference>
<dbReference type="PANTHER" id="PTHR11117">
    <property type="entry name" value="SUCCINYL-COA LIGASE SUBUNIT ALPHA"/>
    <property type="match status" value="1"/>
</dbReference>
<dbReference type="Pfam" id="PF02629">
    <property type="entry name" value="CoA_binding"/>
    <property type="match status" value="1"/>
</dbReference>
<dbReference type="Pfam" id="PF00549">
    <property type="entry name" value="Ligase_CoA"/>
    <property type="match status" value="1"/>
</dbReference>
<dbReference type="PIRSF" id="PIRSF001553">
    <property type="entry name" value="SucCS_alpha"/>
    <property type="match status" value="1"/>
</dbReference>
<dbReference type="PRINTS" id="PR01798">
    <property type="entry name" value="SCOASYNTHASE"/>
</dbReference>
<dbReference type="SMART" id="SM00881">
    <property type="entry name" value="CoA_binding"/>
    <property type="match status" value="1"/>
</dbReference>
<dbReference type="SUPFAM" id="SSF51735">
    <property type="entry name" value="NAD(P)-binding Rossmann-fold domains"/>
    <property type="match status" value="1"/>
</dbReference>
<dbReference type="SUPFAM" id="SSF52210">
    <property type="entry name" value="Succinyl-CoA synthetase domains"/>
    <property type="match status" value="1"/>
</dbReference>
<dbReference type="PROSITE" id="PS01216">
    <property type="entry name" value="SUCCINYL_COA_LIG_1"/>
    <property type="match status" value="1"/>
</dbReference>
<dbReference type="PROSITE" id="PS00399">
    <property type="entry name" value="SUCCINYL_COA_LIG_2"/>
    <property type="match status" value="1"/>
</dbReference>
<evidence type="ECO:0000255" key="1">
    <source>
        <dbReference type="HAMAP-Rule" id="MF_01988"/>
    </source>
</evidence>
<sequence length="291" mass="30796">MMDVAILVDENTRVIVQGITGFQGSFQAKRMLDYGTKVVGGVTPGKGGSEVHGIPVYNTVEEAVAETNADTSIIYVPARFATDAIFEAFDAGLRLVVCVTEGIPLYDEMLIHRKLREVKSMLLGPNCPGVISPGRSKVGLLPDRSFTQGNLGVVSRSGTLTYQICENLTKAGIGQSTVVGIGGDPMPGLTFVDVLKMFEEDEETKAVLLVGEIGGTAEEKAAEFIKQMSKPVVAFIAGRTAPPGKRMGHAGAIIEGSTGTAEAKMAALRDAGARVAETLLDVVKEVRRVLE</sequence>